<organism>
    <name type="scientific">Shewanella baltica (strain OS223)</name>
    <dbReference type="NCBI Taxonomy" id="407976"/>
    <lineage>
        <taxon>Bacteria</taxon>
        <taxon>Pseudomonadati</taxon>
        <taxon>Pseudomonadota</taxon>
        <taxon>Gammaproteobacteria</taxon>
        <taxon>Alteromonadales</taxon>
        <taxon>Shewanellaceae</taxon>
        <taxon>Shewanella</taxon>
    </lineage>
</organism>
<feature type="chain" id="PRO_1000124113" description="1-deoxy-D-xylulose 5-phosphate reductoisomerase">
    <location>
        <begin position="1"/>
        <end position="396"/>
    </location>
</feature>
<feature type="binding site" evidence="1">
    <location>
        <position position="10"/>
    </location>
    <ligand>
        <name>NADPH</name>
        <dbReference type="ChEBI" id="CHEBI:57783"/>
    </ligand>
</feature>
<feature type="binding site" evidence="1">
    <location>
        <position position="11"/>
    </location>
    <ligand>
        <name>NADPH</name>
        <dbReference type="ChEBI" id="CHEBI:57783"/>
    </ligand>
</feature>
<feature type="binding site" evidence="1">
    <location>
        <position position="12"/>
    </location>
    <ligand>
        <name>NADPH</name>
        <dbReference type="ChEBI" id="CHEBI:57783"/>
    </ligand>
</feature>
<feature type="binding site" evidence="1">
    <location>
        <position position="13"/>
    </location>
    <ligand>
        <name>NADPH</name>
        <dbReference type="ChEBI" id="CHEBI:57783"/>
    </ligand>
</feature>
<feature type="binding site" evidence="1">
    <location>
        <position position="123"/>
    </location>
    <ligand>
        <name>NADPH</name>
        <dbReference type="ChEBI" id="CHEBI:57783"/>
    </ligand>
</feature>
<feature type="binding site" evidence="1">
    <location>
        <position position="124"/>
    </location>
    <ligand>
        <name>1-deoxy-D-xylulose 5-phosphate</name>
        <dbReference type="ChEBI" id="CHEBI:57792"/>
    </ligand>
</feature>
<feature type="binding site" evidence="1">
    <location>
        <position position="125"/>
    </location>
    <ligand>
        <name>NADPH</name>
        <dbReference type="ChEBI" id="CHEBI:57783"/>
    </ligand>
</feature>
<feature type="binding site" evidence="1">
    <location>
        <position position="149"/>
    </location>
    <ligand>
        <name>Mn(2+)</name>
        <dbReference type="ChEBI" id="CHEBI:29035"/>
    </ligand>
</feature>
<feature type="binding site" evidence="1">
    <location>
        <position position="150"/>
    </location>
    <ligand>
        <name>1-deoxy-D-xylulose 5-phosphate</name>
        <dbReference type="ChEBI" id="CHEBI:57792"/>
    </ligand>
</feature>
<feature type="binding site" evidence="1">
    <location>
        <position position="151"/>
    </location>
    <ligand>
        <name>1-deoxy-D-xylulose 5-phosphate</name>
        <dbReference type="ChEBI" id="CHEBI:57792"/>
    </ligand>
</feature>
<feature type="binding site" evidence="1">
    <location>
        <position position="151"/>
    </location>
    <ligand>
        <name>Mn(2+)</name>
        <dbReference type="ChEBI" id="CHEBI:29035"/>
    </ligand>
</feature>
<feature type="binding site" evidence="1">
    <location>
        <position position="185"/>
    </location>
    <ligand>
        <name>1-deoxy-D-xylulose 5-phosphate</name>
        <dbReference type="ChEBI" id="CHEBI:57792"/>
    </ligand>
</feature>
<feature type="binding site" evidence="1">
    <location>
        <position position="208"/>
    </location>
    <ligand>
        <name>1-deoxy-D-xylulose 5-phosphate</name>
        <dbReference type="ChEBI" id="CHEBI:57792"/>
    </ligand>
</feature>
<feature type="binding site" evidence="1">
    <location>
        <position position="214"/>
    </location>
    <ligand>
        <name>NADPH</name>
        <dbReference type="ChEBI" id="CHEBI:57783"/>
    </ligand>
</feature>
<feature type="binding site" evidence="1">
    <location>
        <position position="221"/>
    </location>
    <ligand>
        <name>1-deoxy-D-xylulose 5-phosphate</name>
        <dbReference type="ChEBI" id="CHEBI:57792"/>
    </ligand>
</feature>
<feature type="binding site" evidence="1">
    <location>
        <position position="226"/>
    </location>
    <ligand>
        <name>1-deoxy-D-xylulose 5-phosphate</name>
        <dbReference type="ChEBI" id="CHEBI:57792"/>
    </ligand>
</feature>
<feature type="binding site" evidence="1">
    <location>
        <position position="227"/>
    </location>
    <ligand>
        <name>1-deoxy-D-xylulose 5-phosphate</name>
        <dbReference type="ChEBI" id="CHEBI:57792"/>
    </ligand>
</feature>
<feature type="binding site" evidence="1">
    <location>
        <position position="230"/>
    </location>
    <ligand>
        <name>1-deoxy-D-xylulose 5-phosphate</name>
        <dbReference type="ChEBI" id="CHEBI:57792"/>
    </ligand>
</feature>
<feature type="binding site" evidence="1">
    <location>
        <position position="230"/>
    </location>
    <ligand>
        <name>Mn(2+)</name>
        <dbReference type="ChEBI" id="CHEBI:29035"/>
    </ligand>
</feature>
<gene>
    <name evidence="1" type="primary">dxr</name>
    <name type="ordered locus">Sbal223_2896</name>
</gene>
<comment type="function">
    <text evidence="1">Catalyzes the NADPH-dependent rearrangement and reduction of 1-deoxy-D-xylulose-5-phosphate (DXP) to 2-C-methyl-D-erythritol 4-phosphate (MEP).</text>
</comment>
<comment type="catalytic activity">
    <reaction evidence="1">
        <text>2-C-methyl-D-erythritol 4-phosphate + NADP(+) = 1-deoxy-D-xylulose 5-phosphate + NADPH + H(+)</text>
        <dbReference type="Rhea" id="RHEA:13717"/>
        <dbReference type="ChEBI" id="CHEBI:15378"/>
        <dbReference type="ChEBI" id="CHEBI:57783"/>
        <dbReference type="ChEBI" id="CHEBI:57792"/>
        <dbReference type="ChEBI" id="CHEBI:58262"/>
        <dbReference type="ChEBI" id="CHEBI:58349"/>
        <dbReference type="EC" id="1.1.1.267"/>
    </reaction>
    <physiologicalReaction direction="right-to-left" evidence="1">
        <dbReference type="Rhea" id="RHEA:13719"/>
    </physiologicalReaction>
</comment>
<comment type="cofactor">
    <cofactor evidence="1">
        <name>Mg(2+)</name>
        <dbReference type="ChEBI" id="CHEBI:18420"/>
    </cofactor>
    <cofactor evidence="1">
        <name>Mn(2+)</name>
        <dbReference type="ChEBI" id="CHEBI:29035"/>
    </cofactor>
</comment>
<comment type="pathway">
    <text evidence="1">Isoprenoid biosynthesis; isopentenyl diphosphate biosynthesis via DXP pathway; isopentenyl diphosphate from 1-deoxy-D-xylulose 5-phosphate: step 1/6.</text>
</comment>
<comment type="similarity">
    <text evidence="1">Belongs to the DXR family.</text>
</comment>
<proteinExistence type="inferred from homology"/>
<sequence>MQNMVILGATGSIGASTLSVISANPLAYSVYGLVANASVDKMLALCVAHKPKVAHMVDEAAAKQLRAVLPATLNIQVTTGMNDLLGLVTAAEVDTVMAAIVGAAGLVPTLEAVKAGKRVLLANKEALVMSGELFIEATKRSGAVLLPVDSEHNAIFQCLPQEVQANLGRCDLAASGISHILLTGSGGPFLRSDLATLAAMTPAQACKHPNWSMGPKISVDSATMMNKGLEFIEARWLFNTQAEQLKVVIHPQSVIHSMVQYRDGSVIAQMGNPDMRTPIAHCMAYPQRIHSGVEPLDFFKVGQLSFYEPDFERFPCLALAMDACAQGQEATTVLNAANEIAVEAFLQGQIGFTQIAKVNEACLVTVPKRPMGSIEDILALDAQTRVYARETLASIA</sequence>
<accession>B8E7R0</accession>
<dbReference type="EC" id="1.1.1.267" evidence="1"/>
<dbReference type="EMBL" id="CP001252">
    <property type="protein sequence ID" value="ACK47382.1"/>
    <property type="molecule type" value="Genomic_DNA"/>
</dbReference>
<dbReference type="RefSeq" id="WP_012588126.1">
    <property type="nucleotide sequence ID" value="NC_011663.1"/>
</dbReference>
<dbReference type="SMR" id="B8E7R0"/>
<dbReference type="KEGG" id="sbp:Sbal223_2896"/>
<dbReference type="HOGENOM" id="CLU_035714_0_1_6"/>
<dbReference type="UniPathway" id="UPA00056">
    <property type="reaction ID" value="UER00092"/>
</dbReference>
<dbReference type="Proteomes" id="UP000002507">
    <property type="component" value="Chromosome"/>
</dbReference>
<dbReference type="GO" id="GO:0030604">
    <property type="term" value="F:1-deoxy-D-xylulose-5-phosphate reductoisomerase activity"/>
    <property type="evidence" value="ECO:0007669"/>
    <property type="project" value="UniProtKB-UniRule"/>
</dbReference>
<dbReference type="GO" id="GO:0030145">
    <property type="term" value="F:manganese ion binding"/>
    <property type="evidence" value="ECO:0007669"/>
    <property type="project" value="TreeGrafter"/>
</dbReference>
<dbReference type="GO" id="GO:0070402">
    <property type="term" value="F:NADPH binding"/>
    <property type="evidence" value="ECO:0007669"/>
    <property type="project" value="InterPro"/>
</dbReference>
<dbReference type="GO" id="GO:0051484">
    <property type="term" value="P:isopentenyl diphosphate biosynthetic process, methylerythritol 4-phosphate pathway involved in terpenoid biosynthetic process"/>
    <property type="evidence" value="ECO:0007669"/>
    <property type="project" value="TreeGrafter"/>
</dbReference>
<dbReference type="FunFam" id="1.10.1740.10:FF:000004">
    <property type="entry name" value="1-deoxy-D-xylulose 5-phosphate reductoisomerase"/>
    <property type="match status" value="1"/>
</dbReference>
<dbReference type="FunFam" id="3.40.50.720:FF:000045">
    <property type="entry name" value="1-deoxy-D-xylulose 5-phosphate reductoisomerase"/>
    <property type="match status" value="1"/>
</dbReference>
<dbReference type="Gene3D" id="1.10.1740.10">
    <property type="match status" value="1"/>
</dbReference>
<dbReference type="Gene3D" id="3.40.50.720">
    <property type="entry name" value="NAD(P)-binding Rossmann-like Domain"/>
    <property type="match status" value="1"/>
</dbReference>
<dbReference type="HAMAP" id="MF_00183">
    <property type="entry name" value="DXP_reductoisom"/>
    <property type="match status" value="1"/>
</dbReference>
<dbReference type="InterPro" id="IPR003821">
    <property type="entry name" value="DXP_reductoisomerase"/>
</dbReference>
<dbReference type="InterPro" id="IPR013644">
    <property type="entry name" value="DXP_reductoisomerase_C"/>
</dbReference>
<dbReference type="InterPro" id="IPR013512">
    <property type="entry name" value="DXP_reductoisomerase_N"/>
</dbReference>
<dbReference type="InterPro" id="IPR026877">
    <property type="entry name" value="DXPR_C"/>
</dbReference>
<dbReference type="InterPro" id="IPR036169">
    <property type="entry name" value="DXPR_C_sf"/>
</dbReference>
<dbReference type="InterPro" id="IPR036291">
    <property type="entry name" value="NAD(P)-bd_dom_sf"/>
</dbReference>
<dbReference type="NCBIfam" id="TIGR00243">
    <property type="entry name" value="Dxr"/>
    <property type="match status" value="1"/>
</dbReference>
<dbReference type="NCBIfam" id="NF003938">
    <property type="entry name" value="PRK05447.1-1"/>
    <property type="match status" value="1"/>
</dbReference>
<dbReference type="NCBIfam" id="NF009114">
    <property type="entry name" value="PRK12464.1"/>
    <property type="match status" value="1"/>
</dbReference>
<dbReference type="PANTHER" id="PTHR30525">
    <property type="entry name" value="1-DEOXY-D-XYLULOSE 5-PHOSPHATE REDUCTOISOMERASE"/>
    <property type="match status" value="1"/>
</dbReference>
<dbReference type="PANTHER" id="PTHR30525:SF0">
    <property type="entry name" value="1-DEOXY-D-XYLULOSE 5-PHOSPHATE REDUCTOISOMERASE, CHLOROPLASTIC"/>
    <property type="match status" value="1"/>
</dbReference>
<dbReference type="Pfam" id="PF08436">
    <property type="entry name" value="DXP_redisom_C"/>
    <property type="match status" value="1"/>
</dbReference>
<dbReference type="Pfam" id="PF02670">
    <property type="entry name" value="DXP_reductoisom"/>
    <property type="match status" value="1"/>
</dbReference>
<dbReference type="Pfam" id="PF13288">
    <property type="entry name" value="DXPR_C"/>
    <property type="match status" value="1"/>
</dbReference>
<dbReference type="PIRSF" id="PIRSF006205">
    <property type="entry name" value="Dxp_reductismrs"/>
    <property type="match status" value="1"/>
</dbReference>
<dbReference type="SUPFAM" id="SSF69055">
    <property type="entry name" value="1-deoxy-D-xylulose-5-phosphate reductoisomerase, C-terminal domain"/>
    <property type="match status" value="1"/>
</dbReference>
<dbReference type="SUPFAM" id="SSF55347">
    <property type="entry name" value="Glyceraldehyde-3-phosphate dehydrogenase-like, C-terminal domain"/>
    <property type="match status" value="1"/>
</dbReference>
<dbReference type="SUPFAM" id="SSF51735">
    <property type="entry name" value="NAD(P)-binding Rossmann-fold domains"/>
    <property type="match status" value="1"/>
</dbReference>
<protein>
    <recommendedName>
        <fullName evidence="1">1-deoxy-D-xylulose 5-phosphate reductoisomerase</fullName>
        <shortName evidence="1">DXP reductoisomerase</shortName>
        <ecNumber evidence="1">1.1.1.267</ecNumber>
    </recommendedName>
    <alternativeName>
        <fullName evidence="1">1-deoxyxylulose-5-phosphate reductoisomerase</fullName>
    </alternativeName>
    <alternativeName>
        <fullName evidence="1">2-C-methyl-D-erythritol 4-phosphate synthase</fullName>
    </alternativeName>
</protein>
<keyword id="KW-0414">Isoprene biosynthesis</keyword>
<keyword id="KW-0464">Manganese</keyword>
<keyword id="KW-0479">Metal-binding</keyword>
<keyword id="KW-0521">NADP</keyword>
<keyword id="KW-0560">Oxidoreductase</keyword>
<reference key="1">
    <citation type="submission" date="2008-12" db="EMBL/GenBank/DDBJ databases">
        <title>Complete sequence of chromosome of Shewanella baltica OS223.</title>
        <authorList>
            <consortium name="US DOE Joint Genome Institute"/>
            <person name="Lucas S."/>
            <person name="Copeland A."/>
            <person name="Lapidus A."/>
            <person name="Glavina del Rio T."/>
            <person name="Dalin E."/>
            <person name="Tice H."/>
            <person name="Bruce D."/>
            <person name="Goodwin L."/>
            <person name="Pitluck S."/>
            <person name="Chertkov O."/>
            <person name="Meincke L."/>
            <person name="Brettin T."/>
            <person name="Detter J.C."/>
            <person name="Han C."/>
            <person name="Kuske C.R."/>
            <person name="Larimer F."/>
            <person name="Land M."/>
            <person name="Hauser L."/>
            <person name="Kyrpides N."/>
            <person name="Ovchinnikova G."/>
            <person name="Brettar I."/>
            <person name="Rodrigues J."/>
            <person name="Konstantinidis K."/>
            <person name="Tiedje J."/>
        </authorList>
    </citation>
    <scope>NUCLEOTIDE SEQUENCE [LARGE SCALE GENOMIC DNA]</scope>
    <source>
        <strain>OS223</strain>
    </source>
</reference>
<name>DXR_SHEB2</name>
<evidence type="ECO:0000255" key="1">
    <source>
        <dbReference type="HAMAP-Rule" id="MF_00183"/>
    </source>
</evidence>